<feature type="chain" id="PRO_1000011210" description="Phosphopantetheine adenylyltransferase">
    <location>
        <begin position="1"/>
        <end position="159"/>
    </location>
</feature>
<feature type="binding site" evidence="1">
    <location>
        <begin position="9"/>
        <end position="10"/>
    </location>
    <ligand>
        <name>ATP</name>
        <dbReference type="ChEBI" id="CHEBI:30616"/>
    </ligand>
</feature>
<feature type="binding site" evidence="1">
    <location>
        <position position="9"/>
    </location>
    <ligand>
        <name>substrate</name>
    </ligand>
</feature>
<feature type="binding site" evidence="1">
    <location>
        <position position="17"/>
    </location>
    <ligand>
        <name>ATP</name>
        <dbReference type="ChEBI" id="CHEBI:30616"/>
    </ligand>
</feature>
<feature type="binding site" evidence="1">
    <location>
        <position position="41"/>
    </location>
    <ligand>
        <name>substrate</name>
    </ligand>
</feature>
<feature type="binding site" evidence="1">
    <location>
        <position position="73"/>
    </location>
    <ligand>
        <name>substrate</name>
    </ligand>
</feature>
<feature type="binding site" evidence="1">
    <location>
        <position position="87"/>
    </location>
    <ligand>
        <name>substrate</name>
    </ligand>
</feature>
<feature type="binding site" evidence="1">
    <location>
        <begin position="88"/>
        <end position="90"/>
    </location>
    <ligand>
        <name>ATP</name>
        <dbReference type="ChEBI" id="CHEBI:30616"/>
    </ligand>
</feature>
<feature type="binding site" evidence="1">
    <location>
        <position position="98"/>
    </location>
    <ligand>
        <name>ATP</name>
        <dbReference type="ChEBI" id="CHEBI:30616"/>
    </ligand>
</feature>
<feature type="binding site" evidence="1">
    <location>
        <begin position="123"/>
        <end position="129"/>
    </location>
    <ligand>
        <name>ATP</name>
        <dbReference type="ChEBI" id="CHEBI:30616"/>
    </ligand>
</feature>
<feature type="site" description="Transition state stabilizer" evidence="1">
    <location>
        <position position="17"/>
    </location>
</feature>
<sequence>MNRVLYPGTFDPITKGHGDLVERASRLFDHVIIAVAASPKKNPLFPLEQRVELAREVTKHLPNVEVIGFSSLLAHFAKEQGANVFLRGLRAVSDFEYEFQLANMNRQLAPDVESLFLTPSERYSFISSTLVREIAALGGDISKFVHPVVADALTERFKK</sequence>
<reference key="1">
    <citation type="submission" date="2007-05" db="EMBL/GenBank/DDBJ databases">
        <title>Complete sequence of Pseudomonas putida F1.</title>
        <authorList>
            <consortium name="US DOE Joint Genome Institute"/>
            <person name="Copeland A."/>
            <person name="Lucas S."/>
            <person name="Lapidus A."/>
            <person name="Barry K."/>
            <person name="Detter J.C."/>
            <person name="Glavina del Rio T."/>
            <person name="Hammon N."/>
            <person name="Israni S."/>
            <person name="Dalin E."/>
            <person name="Tice H."/>
            <person name="Pitluck S."/>
            <person name="Chain P."/>
            <person name="Malfatti S."/>
            <person name="Shin M."/>
            <person name="Vergez L."/>
            <person name="Schmutz J."/>
            <person name="Larimer F."/>
            <person name="Land M."/>
            <person name="Hauser L."/>
            <person name="Kyrpides N."/>
            <person name="Lykidis A."/>
            <person name="Parales R."/>
            <person name="Richardson P."/>
        </authorList>
    </citation>
    <scope>NUCLEOTIDE SEQUENCE [LARGE SCALE GENOMIC DNA]</scope>
    <source>
        <strain>ATCC 700007 / DSM 6899 / JCM 31910 / BCRC 17059 / LMG 24140 / F1</strain>
    </source>
</reference>
<organism>
    <name type="scientific">Pseudomonas putida (strain ATCC 700007 / DSM 6899 / JCM 31910 / BCRC 17059 / LMG 24140 / F1)</name>
    <dbReference type="NCBI Taxonomy" id="351746"/>
    <lineage>
        <taxon>Bacteria</taxon>
        <taxon>Pseudomonadati</taxon>
        <taxon>Pseudomonadota</taxon>
        <taxon>Gammaproteobacteria</taxon>
        <taxon>Pseudomonadales</taxon>
        <taxon>Pseudomonadaceae</taxon>
        <taxon>Pseudomonas</taxon>
    </lineage>
</organism>
<protein>
    <recommendedName>
        <fullName evidence="1">Phosphopantetheine adenylyltransferase</fullName>
        <ecNumber evidence="1">2.7.7.3</ecNumber>
    </recommendedName>
    <alternativeName>
        <fullName evidence="1">Dephospho-CoA pyrophosphorylase</fullName>
    </alternativeName>
    <alternativeName>
        <fullName evidence="1">Pantetheine-phosphate adenylyltransferase</fullName>
        <shortName evidence="1">PPAT</shortName>
    </alternativeName>
</protein>
<dbReference type="EC" id="2.7.7.3" evidence="1"/>
<dbReference type="EMBL" id="CP000712">
    <property type="protein sequence ID" value="ABQ81117.1"/>
    <property type="molecule type" value="Genomic_DNA"/>
</dbReference>
<dbReference type="SMR" id="A5WAF7"/>
<dbReference type="KEGG" id="ppf:Pput_4997"/>
<dbReference type="eggNOG" id="COG0669">
    <property type="taxonomic scope" value="Bacteria"/>
</dbReference>
<dbReference type="HOGENOM" id="CLU_100149_0_1_6"/>
<dbReference type="UniPathway" id="UPA00241">
    <property type="reaction ID" value="UER00355"/>
</dbReference>
<dbReference type="GO" id="GO:0005737">
    <property type="term" value="C:cytoplasm"/>
    <property type="evidence" value="ECO:0007669"/>
    <property type="project" value="UniProtKB-SubCell"/>
</dbReference>
<dbReference type="GO" id="GO:0005524">
    <property type="term" value="F:ATP binding"/>
    <property type="evidence" value="ECO:0007669"/>
    <property type="project" value="UniProtKB-KW"/>
</dbReference>
<dbReference type="GO" id="GO:0004595">
    <property type="term" value="F:pantetheine-phosphate adenylyltransferase activity"/>
    <property type="evidence" value="ECO:0007669"/>
    <property type="project" value="UniProtKB-UniRule"/>
</dbReference>
<dbReference type="GO" id="GO:0015937">
    <property type="term" value="P:coenzyme A biosynthetic process"/>
    <property type="evidence" value="ECO:0007669"/>
    <property type="project" value="UniProtKB-UniRule"/>
</dbReference>
<dbReference type="CDD" id="cd02163">
    <property type="entry name" value="PPAT"/>
    <property type="match status" value="1"/>
</dbReference>
<dbReference type="Gene3D" id="3.40.50.620">
    <property type="entry name" value="HUPs"/>
    <property type="match status" value="1"/>
</dbReference>
<dbReference type="HAMAP" id="MF_00151">
    <property type="entry name" value="PPAT_bact"/>
    <property type="match status" value="1"/>
</dbReference>
<dbReference type="InterPro" id="IPR004821">
    <property type="entry name" value="Cyt_trans-like"/>
</dbReference>
<dbReference type="InterPro" id="IPR001980">
    <property type="entry name" value="PPAT"/>
</dbReference>
<dbReference type="InterPro" id="IPR014729">
    <property type="entry name" value="Rossmann-like_a/b/a_fold"/>
</dbReference>
<dbReference type="NCBIfam" id="TIGR01510">
    <property type="entry name" value="coaD_prev_kdtB"/>
    <property type="match status" value="1"/>
</dbReference>
<dbReference type="NCBIfam" id="TIGR00125">
    <property type="entry name" value="cyt_tran_rel"/>
    <property type="match status" value="1"/>
</dbReference>
<dbReference type="PANTHER" id="PTHR21342">
    <property type="entry name" value="PHOSPHOPANTETHEINE ADENYLYLTRANSFERASE"/>
    <property type="match status" value="1"/>
</dbReference>
<dbReference type="PANTHER" id="PTHR21342:SF1">
    <property type="entry name" value="PHOSPHOPANTETHEINE ADENYLYLTRANSFERASE"/>
    <property type="match status" value="1"/>
</dbReference>
<dbReference type="Pfam" id="PF01467">
    <property type="entry name" value="CTP_transf_like"/>
    <property type="match status" value="1"/>
</dbReference>
<dbReference type="PRINTS" id="PR01020">
    <property type="entry name" value="LPSBIOSNTHSS"/>
</dbReference>
<dbReference type="SUPFAM" id="SSF52374">
    <property type="entry name" value="Nucleotidylyl transferase"/>
    <property type="match status" value="1"/>
</dbReference>
<evidence type="ECO:0000255" key="1">
    <source>
        <dbReference type="HAMAP-Rule" id="MF_00151"/>
    </source>
</evidence>
<comment type="function">
    <text evidence="1">Reversibly transfers an adenylyl group from ATP to 4'-phosphopantetheine, yielding dephospho-CoA (dPCoA) and pyrophosphate.</text>
</comment>
<comment type="catalytic activity">
    <reaction evidence="1">
        <text>(R)-4'-phosphopantetheine + ATP + H(+) = 3'-dephospho-CoA + diphosphate</text>
        <dbReference type="Rhea" id="RHEA:19801"/>
        <dbReference type="ChEBI" id="CHEBI:15378"/>
        <dbReference type="ChEBI" id="CHEBI:30616"/>
        <dbReference type="ChEBI" id="CHEBI:33019"/>
        <dbReference type="ChEBI" id="CHEBI:57328"/>
        <dbReference type="ChEBI" id="CHEBI:61723"/>
        <dbReference type="EC" id="2.7.7.3"/>
    </reaction>
</comment>
<comment type="cofactor">
    <cofactor evidence="1">
        <name>Mg(2+)</name>
        <dbReference type="ChEBI" id="CHEBI:18420"/>
    </cofactor>
</comment>
<comment type="pathway">
    <text evidence="1">Cofactor biosynthesis; coenzyme A biosynthesis; CoA from (R)-pantothenate: step 4/5.</text>
</comment>
<comment type="subunit">
    <text evidence="1">Homohexamer.</text>
</comment>
<comment type="subcellular location">
    <subcellularLocation>
        <location evidence="1">Cytoplasm</location>
    </subcellularLocation>
</comment>
<comment type="similarity">
    <text evidence="1">Belongs to the bacterial CoaD family.</text>
</comment>
<proteinExistence type="inferred from homology"/>
<keyword id="KW-0067">ATP-binding</keyword>
<keyword id="KW-0173">Coenzyme A biosynthesis</keyword>
<keyword id="KW-0963">Cytoplasm</keyword>
<keyword id="KW-0460">Magnesium</keyword>
<keyword id="KW-0547">Nucleotide-binding</keyword>
<keyword id="KW-0548">Nucleotidyltransferase</keyword>
<keyword id="KW-0808">Transferase</keyword>
<name>COAD_PSEP1</name>
<accession>A5WAF7</accession>
<gene>
    <name evidence="1" type="primary">coaD</name>
    <name type="ordered locus">Pput_4997</name>
</gene>